<comment type="function">
    <text evidence="1 3">Chaperone protein involved in the assembly of the mitochondrial NADH:ubiquinone oxidoreductase complex (complex I) (By similarity). Essential for viability (PubMed:1905256).</text>
</comment>
<comment type="subunit">
    <text evidence="4">Associates with complex I assembly intermediates during its biogenesis in a NdufAF3 and NdufAF4 dependent manner.</text>
</comment>
<comment type="subcellular location">
    <subcellularLocation>
        <location evidence="6">Membrane</location>
        <topology evidence="6">Multi-pass membrane protein</topology>
    </subcellularLocation>
</comment>
<comment type="similarity">
    <text evidence="6">Belongs to the Tim17/Tim22/Tim23 family.</text>
</comment>
<accession>P81928</accession>
<accession>A0A0B4KFZ0</accession>
<accession>Q9VFM8</accession>
<name>TIDC1_DROME</name>
<dbReference type="EMBL" id="M62975">
    <property type="protein sequence ID" value="AAD40352.2"/>
    <property type="molecule type" value="Genomic_DNA"/>
</dbReference>
<dbReference type="EMBL" id="AE014297">
    <property type="protein sequence ID" value="AAF55023.1"/>
    <property type="molecule type" value="Genomic_DNA"/>
</dbReference>
<dbReference type="EMBL" id="AE014297">
    <property type="protein sequence ID" value="AGB95942.1"/>
    <property type="molecule type" value="Genomic_DNA"/>
</dbReference>
<dbReference type="EMBL" id="AY058577">
    <property type="protein sequence ID" value="AAL13806.1"/>
    <property type="molecule type" value="mRNA"/>
</dbReference>
<dbReference type="PIR" id="JQ1024">
    <property type="entry name" value="JQ1024"/>
</dbReference>
<dbReference type="RefSeq" id="NP_001262561.1">
    <property type="nucleotide sequence ID" value="NM_001275632.1"/>
</dbReference>
<dbReference type="RefSeq" id="NP_476951.1">
    <property type="nucleotide sequence ID" value="NM_057603.6"/>
</dbReference>
<dbReference type="SMR" id="P81928"/>
<dbReference type="BioGRID" id="66797">
    <property type="interactions" value="3"/>
</dbReference>
<dbReference type="FunCoup" id="P81928">
    <property type="interactions" value="801"/>
</dbReference>
<dbReference type="IntAct" id="P81928">
    <property type="interactions" value="1"/>
</dbReference>
<dbReference type="STRING" id="7227.FBpp0308011"/>
<dbReference type="PaxDb" id="7227-FBpp0082370"/>
<dbReference type="DNASU" id="41720"/>
<dbReference type="EnsemblMetazoa" id="FBtr0082909">
    <property type="protein sequence ID" value="FBpp0082370"/>
    <property type="gene ID" value="FBgn0010340"/>
</dbReference>
<dbReference type="EnsemblMetazoa" id="FBtr0337095">
    <property type="protein sequence ID" value="FBpp0308011"/>
    <property type="gene ID" value="FBgn0010340"/>
</dbReference>
<dbReference type="GeneID" id="41720"/>
<dbReference type="KEGG" id="dme:Dmel_CG9852"/>
<dbReference type="AGR" id="FB:FBgn0010340"/>
<dbReference type="CTD" id="41720"/>
<dbReference type="FlyBase" id="FBgn0010340">
    <property type="gene designation" value="Timmdc1"/>
</dbReference>
<dbReference type="VEuPathDB" id="VectorBase:FBgn0010340"/>
<dbReference type="eggNOG" id="KOG4608">
    <property type="taxonomic scope" value="Eukaryota"/>
</dbReference>
<dbReference type="GeneTree" id="ENSGT00390000013817"/>
<dbReference type="HOGENOM" id="CLU_093277_0_0_1"/>
<dbReference type="InParanoid" id="P81928"/>
<dbReference type="OMA" id="SYMNFME"/>
<dbReference type="OrthoDB" id="5826189at2759"/>
<dbReference type="PhylomeDB" id="P81928"/>
<dbReference type="Reactome" id="R-DME-6799198">
    <property type="pathway name" value="Complex I biogenesis"/>
</dbReference>
<dbReference type="BioGRID-ORCS" id="41720">
    <property type="hits" value="0 hits in 1 CRISPR screen"/>
</dbReference>
<dbReference type="GenomeRNAi" id="41720"/>
<dbReference type="PRO" id="PR:P81928"/>
<dbReference type="Proteomes" id="UP000000803">
    <property type="component" value="Chromosome 3R"/>
</dbReference>
<dbReference type="Bgee" id="FBgn0010340">
    <property type="expression patterns" value="Expressed in oviduct (Drosophila) and 88 other cell types or tissues"/>
</dbReference>
<dbReference type="ExpressionAtlas" id="P81928">
    <property type="expression patterns" value="baseline and differential"/>
</dbReference>
<dbReference type="GO" id="GO:0016020">
    <property type="term" value="C:membrane"/>
    <property type="evidence" value="ECO:0007669"/>
    <property type="project" value="UniProtKB-SubCell"/>
</dbReference>
<dbReference type="GO" id="GO:0005739">
    <property type="term" value="C:mitochondrion"/>
    <property type="evidence" value="ECO:0000318"/>
    <property type="project" value="GO_Central"/>
</dbReference>
<dbReference type="GO" id="GO:0032981">
    <property type="term" value="P:mitochondrial respiratory chain complex I assembly"/>
    <property type="evidence" value="ECO:0000316"/>
    <property type="project" value="FlyBase"/>
</dbReference>
<dbReference type="InterPro" id="IPR055299">
    <property type="entry name" value="TIMMDC1"/>
</dbReference>
<dbReference type="PANTHER" id="PTHR13002">
    <property type="entry name" value="C3ORF1 PROTEIN-RELATED"/>
    <property type="match status" value="1"/>
</dbReference>
<dbReference type="PANTHER" id="PTHR13002:SF1">
    <property type="entry name" value="COMPLEX I ASSEMBLY FACTOR TIMMDC1, MITOCHONDRIAL"/>
    <property type="match status" value="1"/>
</dbReference>
<dbReference type="Pfam" id="PF02466">
    <property type="entry name" value="Tim17"/>
    <property type="match status" value="1"/>
</dbReference>
<gene>
    <name evidence="5 7" type="primary">Timmdc1</name>
    <name evidence="7" type="synonym">140up</name>
    <name evidence="7" type="ORF">CG9852</name>
</gene>
<sequence length="261" mass="29182">MNFLWKGRRFLIAGILPTFEGAADEIVDKENKTYKAFLASKPPEETGLERLKQMFTIDEFGSISSELNSVYQAGFLGFLIGAIYGGVTQSRVAYMNFMENNQATAFKSHFDAKKKLQDQFTVNFAKGGFKWGWRVGLFTTSYFGIITCMSVYRGKSSIYEYLAAGSITGSLYKVSLGLRGMAAGGIIGGFLGGVAGVTSLLLMKASGTSMEEVRYWQYKWRLDRDENIQQAFKKLTEDENPELFKAHDEKTSEHVSLDTIK</sequence>
<reference evidence="6" key="1">
    <citation type="journal article" date="1991" name="Gene">
        <title>Analysis of the promoter region of the housekeeping gene DmRP140 by sequence comparison of Drosophila melanogaster and Drosophila virilis.</title>
        <authorList>
            <person name="Sitzler S."/>
            <person name="Oldenburg I."/>
            <person name="Petersen G."/>
            <person name="Bautz E.K.F."/>
        </authorList>
    </citation>
    <scope>NUCLEOTIDE SEQUENCE [GENOMIC DNA]</scope>
    <scope>FUNCTION</scope>
    <source>
        <tissue>Embryo</tissue>
    </source>
</reference>
<reference evidence="6" key="2">
    <citation type="journal article" date="2000" name="Science">
        <title>The genome sequence of Drosophila melanogaster.</title>
        <authorList>
            <person name="Adams M.D."/>
            <person name="Celniker S.E."/>
            <person name="Holt R.A."/>
            <person name="Evans C.A."/>
            <person name="Gocayne J.D."/>
            <person name="Amanatides P.G."/>
            <person name="Scherer S.E."/>
            <person name="Li P.W."/>
            <person name="Hoskins R.A."/>
            <person name="Galle R.F."/>
            <person name="George R.A."/>
            <person name="Lewis S.E."/>
            <person name="Richards S."/>
            <person name="Ashburner M."/>
            <person name="Henderson S.N."/>
            <person name="Sutton G.G."/>
            <person name="Wortman J.R."/>
            <person name="Yandell M.D."/>
            <person name="Zhang Q."/>
            <person name="Chen L.X."/>
            <person name="Brandon R.C."/>
            <person name="Rogers Y.-H.C."/>
            <person name="Blazej R.G."/>
            <person name="Champe M."/>
            <person name="Pfeiffer B.D."/>
            <person name="Wan K.H."/>
            <person name="Doyle C."/>
            <person name="Baxter E.G."/>
            <person name="Helt G."/>
            <person name="Nelson C.R."/>
            <person name="Miklos G.L.G."/>
            <person name="Abril J.F."/>
            <person name="Agbayani A."/>
            <person name="An H.-J."/>
            <person name="Andrews-Pfannkoch C."/>
            <person name="Baldwin D."/>
            <person name="Ballew R.M."/>
            <person name="Basu A."/>
            <person name="Baxendale J."/>
            <person name="Bayraktaroglu L."/>
            <person name="Beasley E.M."/>
            <person name="Beeson K.Y."/>
            <person name="Benos P.V."/>
            <person name="Berman B.P."/>
            <person name="Bhandari D."/>
            <person name="Bolshakov S."/>
            <person name="Borkova D."/>
            <person name="Botchan M.R."/>
            <person name="Bouck J."/>
            <person name="Brokstein P."/>
            <person name="Brottier P."/>
            <person name="Burtis K.C."/>
            <person name="Busam D.A."/>
            <person name="Butler H."/>
            <person name="Cadieu E."/>
            <person name="Center A."/>
            <person name="Chandra I."/>
            <person name="Cherry J.M."/>
            <person name="Cawley S."/>
            <person name="Dahlke C."/>
            <person name="Davenport L.B."/>
            <person name="Davies P."/>
            <person name="de Pablos B."/>
            <person name="Delcher A."/>
            <person name="Deng Z."/>
            <person name="Mays A.D."/>
            <person name="Dew I."/>
            <person name="Dietz S.M."/>
            <person name="Dodson K."/>
            <person name="Doup L.E."/>
            <person name="Downes M."/>
            <person name="Dugan-Rocha S."/>
            <person name="Dunkov B.C."/>
            <person name="Dunn P."/>
            <person name="Durbin K.J."/>
            <person name="Evangelista C.C."/>
            <person name="Ferraz C."/>
            <person name="Ferriera S."/>
            <person name="Fleischmann W."/>
            <person name="Fosler C."/>
            <person name="Gabrielian A.E."/>
            <person name="Garg N.S."/>
            <person name="Gelbart W.M."/>
            <person name="Glasser K."/>
            <person name="Glodek A."/>
            <person name="Gong F."/>
            <person name="Gorrell J.H."/>
            <person name="Gu Z."/>
            <person name="Guan P."/>
            <person name="Harris M."/>
            <person name="Harris N.L."/>
            <person name="Harvey D.A."/>
            <person name="Heiman T.J."/>
            <person name="Hernandez J.R."/>
            <person name="Houck J."/>
            <person name="Hostin D."/>
            <person name="Houston K.A."/>
            <person name="Howland T.J."/>
            <person name="Wei M.-H."/>
            <person name="Ibegwam C."/>
            <person name="Jalali M."/>
            <person name="Kalush F."/>
            <person name="Karpen G.H."/>
            <person name="Ke Z."/>
            <person name="Kennison J.A."/>
            <person name="Ketchum K.A."/>
            <person name="Kimmel B.E."/>
            <person name="Kodira C.D."/>
            <person name="Kraft C.L."/>
            <person name="Kravitz S."/>
            <person name="Kulp D."/>
            <person name="Lai Z."/>
            <person name="Lasko P."/>
            <person name="Lei Y."/>
            <person name="Levitsky A.A."/>
            <person name="Li J.H."/>
            <person name="Li Z."/>
            <person name="Liang Y."/>
            <person name="Lin X."/>
            <person name="Liu X."/>
            <person name="Mattei B."/>
            <person name="McIntosh T.C."/>
            <person name="McLeod M.P."/>
            <person name="McPherson D."/>
            <person name="Merkulov G."/>
            <person name="Milshina N.V."/>
            <person name="Mobarry C."/>
            <person name="Morris J."/>
            <person name="Moshrefi A."/>
            <person name="Mount S.M."/>
            <person name="Moy M."/>
            <person name="Murphy B."/>
            <person name="Murphy L."/>
            <person name="Muzny D.M."/>
            <person name="Nelson D.L."/>
            <person name="Nelson D.R."/>
            <person name="Nelson K.A."/>
            <person name="Nixon K."/>
            <person name="Nusskern D.R."/>
            <person name="Pacleb J.M."/>
            <person name="Palazzolo M."/>
            <person name="Pittman G.S."/>
            <person name="Pan S."/>
            <person name="Pollard J."/>
            <person name="Puri V."/>
            <person name="Reese M.G."/>
            <person name="Reinert K."/>
            <person name="Remington K."/>
            <person name="Saunders R.D.C."/>
            <person name="Scheeler F."/>
            <person name="Shen H."/>
            <person name="Shue B.C."/>
            <person name="Siden-Kiamos I."/>
            <person name="Simpson M."/>
            <person name="Skupski M.P."/>
            <person name="Smith T.J."/>
            <person name="Spier E."/>
            <person name="Spradling A.C."/>
            <person name="Stapleton M."/>
            <person name="Strong R."/>
            <person name="Sun E."/>
            <person name="Svirskas R."/>
            <person name="Tector C."/>
            <person name="Turner R."/>
            <person name="Venter E."/>
            <person name="Wang A.H."/>
            <person name="Wang X."/>
            <person name="Wang Z.-Y."/>
            <person name="Wassarman D.A."/>
            <person name="Weinstock G.M."/>
            <person name="Weissenbach J."/>
            <person name="Williams S.M."/>
            <person name="Woodage T."/>
            <person name="Worley K.C."/>
            <person name="Wu D."/>
            <person name="Yang S."/>
            <person name="Yao Q.A."/>
            <person name="Ye J."/>
            <person name="Yeh R.-F."/>
            <person name="Zaveri J.S."/>
            <person name="Zhan M."/>
            <person name="Zhang G."/>
            <person name="Zhao Q."/>
            <person name="Zheng L."/>
            <person name="Zheng X.H."/>
            <person name="Zhong F.N."/>
            <person name="Zhong W."/>
            <person name="Zhou X."/>
            <person name="Zhu S.C."/>
            <person name="Zhu X."/>
            <person name="Smith H.O."/>
            <person name="Gibbs R.A."/>
            <person name="Myers E.W."/>
            <person name="Rubin G.M."/>
            <person name="Venter J.C."/>
        </authorList>
    </citation>
    <scope>NUCLEOTIDE SEQUENCE [LARGE SCALE GENOMIC DNA]</scope>
    <source>
        <strain>Berkeley</strain>
    </source>
</reference>
<reference key="3">
    <citation type="journal article" date="2002" name="Genome Biol.">
        <title>Annotation of the Drosophila melanogaster euchromatic genome: a systematic review.</title>
        <authorList>
            <person name="Misra S."/>
            <person name="Crosby M.A."/>
            <person name="Mungall C.J."/>
            <person name="Matthews B.B."/>
            <person name="Campbell K.S."/>
            <person name="Hradecky P."/>
            <person name="Huang Y."/>
            <person name="Kaminker J.S."/>
            <person name="Millburn G.H."/>
            <person name="Prochnik S.E."/>
            <person name="Smith C.D."/>
            <person name="Tupy J.L."/>
            <person name="Whitfield E.J."/>
            <person name="Bayraktaroglu L."/>
            <person name="Berman B.P."/>
            <person name="Bettencourt B.R."/>
            <person name="Celniker S.E."/>
            <person name="de Grey A.D.N.J."/>
            <person name="Drysdale R.A."/>
            <person name="Harris N.L."/>
            <person name="Richter J."/>
            <person name="Russo S."/>
            <person name="Schroeder A.J."/>
            <person name="Shu S.Q."/>
            <person name="Stapleton M."/>
            <person name="Yamada C."/>
            <person name="Ashburner M."/>
            <person name="Gelbart W.M."/>
            <person name="Rubin G.M."/>
            <person name="Lewis S.E."/>
        </authorList>
    </citation>
    <scope>GENOME REANNOTATION</scope>
    <source>
        <strain>Berkeley</strain>
    </source>
</reference>
<reference key="4">
    <citation type="journal article" date="2002" name="Genome Biol.">
        <title>A Drosophila full-length cDNA resource.</title>
        <authorList>
            <person name="Stapleton M."/>
            <person name="Carlson J.W."/>
            <person name="Brokstein P."/>
            <person name="Yu C."/>
            <person name="Champe M."/>
            <person name="George R.A."/>
            <person name="Guarin H."/>
            <person name="Kronmiller B."/>
            <person name="Pacleb J.M."/>
            <person name="Park S."/>
            <person name="Wan K.H."/>
            <person name="Rubin G.M."/>
            <person name="Celniker S.E."/>
        </authorList>
    </citation>
    <scope>NUCLEOTIDE SEQUENCE [LARGE SCALE MRNA]</scope>
    <source>
        <strain>Berkeley</strain>
        <tissue>Embryo</tissue>
    </source>
</reference>
<reference key="5">
    <citation type="journal article" date="2021" name="IScience">
        <title>Dissecting the concordant and disparate roles of NDUFAF3 and NDUFAF4 in mitochondrial complex I biogenesis.</title>
        <authorList>
            <person name="Murari A."/>
            <person name="Rhooms S.K."/>
            <person name="Garcia C."/>
            <person name="Liu T."/>
            <person name="Li H."/>
            <person name="Mishra B."/>
            <person name="Deshong C."/>
            <person name="Owusu-Ansah E."/>
        </authorList>
    </citation>
    <scope>INTERACTION WITH COMPLEX 1</scope>
</reference>
<protein>
    <recommendedName>
        <fullName evidence="6">Complex I assembly factor TIMMDC1, mitochondrial</fullName>
    </recommendedName>
    <alternativeName>
        <fullName evidence="7">RPII140-upstream gene protein</fullName>
    </alternativeName>
    <alternativeName>
        <fullName evidence="7">Translocase of inner mitochondrial membrane domain-containing protein 1</fullName>
        <shortName evidence="5">dTIMMDC1</shortName>
    </alternativeName>
</protein>
<organism evidence="8">
    <name type="scientific">Drosophila melanogaster</name>
    <name type="common">Fruit fly</name>
    <dbReference type="NCBI Taxonomy" id="7227"/>
    <lineage>
        <taxon>Eukaryota</taxon>
        <taxon>Metazoa</taxon>
        <taxon>Ecdysozoa</taxon>
        <taxon>Arthropoda</taxon>
        <taxon>Hexapoda</taxon>
        <taxon>Insecta</taxon>
        <taxon>Pterygota</taxon>
        <taxon>Neoptera</taxon>
        <taxon>Endopterygota</taxon>
        <taxon>Diptera</taxon>
        <taxon>Brachycera</taxon>
        <taxon>Muscomorpha</taxon>
        <taxon>Ephydroidea</taxon>
        <taxon>Drosophilidae</taxon>
        <taxon>Drosophila</taxon>
        <taxon>Sophophora</taxon>
    </lineage>
</organism>
<feature type="chain" id="PRO_0000064352" description="Complex I assembly factor TIMMDC1, mitochondrial">
    <location>
        <begin position="1"/>
        <end position="261"/>
    </location>
</feature>
<feature type="transmembrane region" description="Helical" evidence="2">
    <location>
        <begin position="67"/>
        <end position="87"/>
    </location>
</feature>
<feature type="transmembrane region" description="Helical" evidence="2">
    <location>
        <begin position="131"/>
        <end position="151"/>
    </location>
</feature>
<feature type="transmembrane region" description="Helical" evidence="2">
    <location>
        <begin position="183"/>
        <end position="203"/>
    </location>
</feature>
<feature type="sequence conflict" description="In Ref. 1; AAD40352." evidence="6" ref="1">
    <original>S</original>
    <variation>F</variation>
    <location>
        <position position="64"/>
    </location>
</feature>
<proteinExistence type="evidence at protein level"/>
<keyword id="KW-0472">Membrane</keyword>
<keyword id="KW-1185">Reference proteome</keyword>
<keyword id="KW-0812">Transmembrane</keyword>
<keyword id="KW-1133">Transmembrane helix</keyword>
<evidence type="ECO:0000250" key="1">
    <source>
        <dbReference type="UniProtKB" id="Q9NPL8"/>
    </source>
</evidence>
<evidence type="ECO:0000255" key="2"/>
<evidence type="ECO:0000269" key="3">
    <source>
    </source>
</evidence>
<evidence type="ECO:0000269" key="4">
    <source>
    </source>
</evidence>
<evidence type="ECO:0000303" key="5">
    <source>
    </source>
</evidence>
<evidence type="ECO:0000305" key="6"/>
<evidence type="ECO:0000312" key="7">
    <source>
        <dbReference type="FlyBase" id="FBgn0010340"/>
    </source>
</evidence>
<evidence type="ECO:0000312" key="8">
    <source>
        <dbReference type="Proteomes" id="UP000000803"/>
    </source>
</evidence>